<proteinExistence type="inferred from homology"/>
<evidence type="ECO:0000255" key="1">
    <source>
        <dbReference type="HAMAP-Rule" id="MF_00315"/>
    </source>
</evidence>
<feature type="chain" id="PRO_0000256505" description="1-deoxy-D-xylulose-5-phosphate synthase">
    <location>
        <begin position="1"/>
        <end position="638"/>
    </location>
</feature>
<feature type="binding site" evidence="1">
    <location>
        <position position="79"/>
    </location>
    <ligand>
        <name>thiamine diphosphate</name>
        <dbReference type="ChEBI" id="CHEBI:58937"/>
    </ligand>
</feature>
<feature type="binding site" evidence="1">
    <location>
        <begin position="120"/>
        <end position="122"/>
    </location>
    <ligand>
        <name>thiamine diphosphate</name>
        <dbReference type="ChEBI" id="CHEBI:58937"/>
    </ligand>
</feature>
<feature type="binding site" evidence="1">
    <location>
        <position position="151"/>
    </location>
    <ligand>
        <name>Mg(2+)</name>
        <dbReference type="ChEBI" id="CHEBI:18420"/>
    </ligand>
</feature>
<feature type="binding site" evidence="1">
    <location>
        <begin position="152"/>
        <end position="153"/>
    </location>
    <ligand>
        <name>thiamine diphosphate</name>
        <dbReference type="ChEBI" id="CHEBI:58937"/>
    </ligand>
</feature>
<feature type="binding site" evidence="1">
    <location>
        <position position="182"/>
    </location>
    <ligand>
        <name>Mg(2+)</name>
        <dbReference type="ChEBI" id="CHEBI:18420"/>
    </ligand>
</feature>
<feature type="binding site" evidence="1">
    <location>
        <position position="182"/>
    </location>
    <ligand>
        <name>thiamine diphosphate</name>
        <dbReference type="ChEBI" id="CHEBI:58937"/>
    </ligand>
</feature>
<feature type="binding site" evidence="1">
    <location>
        <position position="291"/>
    </location>
    <ligand>
        <name>thiamine diphosphate</name>
        <dbReference type="ChEBI" id="CHEBI:58937"/>
    </ligand>
</feature>
<feature type="binding site" evidence="1">
    <location>
        <position position="373"/>
    </location>
    <ligand>
        <name>thiamine diphosphate</name>
        <dbReference type="ChEBI" id="CHEBI:58937"/>
    </ligand>
</feature>
<reference key="1">
    <citation type="journal article" date="2005" name="Jpn. Agric. Res. Q.">
        <title>Genome sequence of Xanthomonas oryzae pv. oryzae suggests contribution of large numbers of effector genes and insertion sequences to its race diversity.</title>
        <authorList>
            <person name="Ochiai H."/>
            <person name="Inoue Y."/>
            <person name="Takeya M."/>
            <person name="Sasaki A."/>
            <person name="Kaku H."/>
        </authorList>
    </citation>
    <scope>NUCLEOTIDE SEQUENCE [LARGE SCALE GENOMIC DNA]</scope>
    <source>
        <strain>MAFF 311018</strain>
    </source>
</reference>
<sequence length="638" mass="68604">MIDTTRYPRLSRIHTPDDLRRFDEAELTVIAEELRSYLIESVGKSGGHFAAGLGVIELTVALHYLYQTPVDQLVWDVGHQTYPHKILTGRRDQIHTVKQKDGVAPFPKREESVYDTFGVGHSSTSISAALGMAIAAQRNGDDRKVVAVIGDGAMTAGMVYEALNHAGGMDPEPNLLVILNDNRMSISEAVGGLTKMLGRASGSRTLNAIREGGKKILGDKKNNPTARFVRRWEEHWKGMFVPSTLFEEMGFHYTGPIDGHDLPRLVGALKTLQTLKGPQLLHVITTKGKGYELAEGDQIGYHAVSPFDPSKGLVAKGGAKKPTYTDVFSDWVCDMAAAEPKLLVITPAMREGSGLVRFSKEYPQRYFDVAIAEQHAVTLAAGMATQGAKPVVAIYSTFLQRGYDQLVHDVAVQQLDVLFAIDRGGVVGPDGATHAGNLDLSFLRCVPHMVVMAPADEAECRQMLSTGMQYQGPAAVRYPRGTGPGAALDSSLATLPIGKAQLRHSGTRIALLGFGATVDAAEAVGRDLGLTVVNMRFVKPLDKAMLLELAKTHEGFVTIEDNVVAGGAGSGVSELLNAEAITLPMLHLGLPDSFQHHASREDLLAEAGIDQAGIRTAVLKRWPQLMTGKTPSLNAAAG</sequence>
<dbReference type="EC" id="2.2.1.7" evidence="1"/>
<dbReference type="EMBL" id="AP008229">
    <property type="protein sequence ID" value="BAE68655.1"/>
    <property type="molecule type" value="Genomic_DNA"/>
</dbReference>
<dbReference type="RefSeq" id="WP_011258730.1">
    <property type="nucleotide sequence ID" value="NC_007705.1"/>
</dbReference>
<dbReference type="SMR" id="Q2P472"/>
<dbReference type="KEGG" id="xom:XOO1900"/>
<dbReference type="HOGENOM" id="CLU_009227_1_4_6"/>
<dbReference type="UniPathway" id="UPA00064">
    <property type="reaction ID" value="UER00091"/>
</dbReference>
<dbReference type="GO" id="GO:0005829">
    <property type="term" value="C:cytosol"/>
    <property type="evidence" value="ECO:0007669"/>
    <property type="project" value="TreeGrafter"/>
</dbReference>
<dbReference type="GO" id="GO:0008661">
    <property type="term" value="F:1-deoxy-D-xylulose-5-phosphate synthase activity"/>
    <property type="evidence" value="ECO:0007669"/>
    <property type="project" value="UniProtKB-UniRule"/>
</dbReference>
<dbReference type="GO" id="GO:0000287">
    <property type="term" value="F:magnesium ion binding"/>
    <property type="evidence" value="ECO:0007669"/>
    <property type="project" value="UniProtKB-UniRule"/>
</dbReference>
<dbReference type="GO" id="GO:0030976">
    <property type="term" value="F:thiamine pyrophosphate binding"/>
    <property type="evidence" value="ECO:0007669"/>
    <property type="project" value="UniProtKB-UniRule"/>
</dbReference>
<dbReference type="GO" id="GO:0052865">
    <property type="term" value="P:1-deoxy-D-xylulose 5-phosphate biosynthetic process"/>
    <property type="evidence" value="ECO:0007669"/>
    <property type="project" value="UniProtKB-UniPathway"/>
</dbReference>
<dbReference type="GO" id="GO:0019288">
    <property type="term" value="P:isopentenyl diphosphate biosynthetic process, methylerythritol 4-phosphate pathway"/>
    <property type="evidence" value="ECO:0007669"/>
    <property type="project" value="TreeGrafter"/>
</dbReference>
<dbReference type="GO" id="GO:0016114">
    <property type="term" value="P:terpenoid biosynthetic process"/>
    <property type="evidence" value="ECO:0007669"/>
    <property type="project" value="UniProtKB-UniRule"/>
</dbReference>
<dbReference type="GO" id="GO:0009228">
    <property type="term" value="P:thiamine biosynthetic process"/>
    <property type="evidence" value="ECO:0007669"/>
    <property type="project" value="UniProtKB-UniRule"/>
</dbReference>
<dbReference type="CDD" id="cd02007">
    <property type="entry name" value="TPP_DXS"/>
    <property type="match status" value="1"/>
</dbReference>
<dbReference type="CDD" id="cd07033">
    <property type="entry name" value="TPP_PYR_DXS_TK_like"/>
    <property type="match status" value="1"/>
</dbReference>
<dbReference type="FunFam" id="3.40.50.920:FF:000002">
    <property type="entry name" value="1-deoxy-D-xylulose-5-phosphate synthase"/>
    <property type="match status" value="1"/>
</dbReference>
<dbReference type="FunFam" id="3.40.50.970:FF:000005">
    <property type="entry name" value="1-deoxy-D-xylulose-5-phosphate synthase"/>
    <property type="match status" value="1"/>
</dbReference>
<dbReference type="Gene3D" id="3.40.50.920">
    <property type="match status" value="1"/>
</dbReference>
<dbReference type="Gene3D" id="3.40.50.970">
    <property type="match status" value="2"/>
</dbReference>
<dbReference type="HAMAP" id="MF_00315">
    <property type="entry name" value="DXP_synth"/>
    <property type="match status" value="1"/>
</dbReference>
<dbReference type="InterPro" id="IPR005477">
    <property type="entry name" value="Dxylulose-5-P_synthase"/>
</dbReference>
<dbReference type="InterPro" id="IPR029061">
    <property type="entry name" value="THDP-binding"/>
</dbReference>
<dbReference type="InterPro" id="IPR009014">
    <property type="entry name" value="Transketo_C/PFOR_II"/>
</dbReference>
<dbReference type="InterPro" id="IPR005475">
    <property type="entry name" value="Transketolase-like_Pyr-bd"/>
</dbReference>
<dbReference type="InterPro" id="IPR020826">
    <property type="entry name" value="Transketolase_BS"/>
</dbReference>
<dbReference type="InterPro" id="IPR033248">
    <property type="entry name" value="Transketolase_C"/>
</dbReference>
<dbReference type="InterPro" id="IPR049557">
    <property type="entry name" value="Transketolase_CS"/>
</dbReference>
<dbReference type="NCBIfam" id="TIGR00204">
    <property type="entry name" value="dxs"/>
    <property type="match status" value="1"/>
</dbReference>
<dbReference type="NCBIfam" id="NF003933">
    <property type="entry name" value="PRK05444.2-2"/>
    <property type="match status" value="1"/>
</dbReference>
<dbReference type="PANTHER" id="PTHR43322">
    <property type="entry name" value="1-D-DEOXYXYLULOSE 5-PHOSPHATE SYNTHASE-RELATED"/>
    <property type="match status" value="1"/>
</dbReference>
<dbReference type="PANTHER" id="PTHR43322:SF5">
    <property type="entry name" value="1-DEOXY-D-XYLULOSE-5-PHOSPHATE SYNTHASE, CHLOROPLASTIC"/>
    <property type="match status" value="1"/>
</dbReference>
<dbReference type="Pfam" id="PF13292">
    <property type="entry name" value="DXP_synthase_N"/>
    <property type="match status" value="1"/>
</dbReference>
<dbReference type="Pfam" id="PF02779">
    <property type="entry name" value="Transket_pyr"/>
    <property type="match status" value="1"/>
</dbReference>
<dbReference type="Pfam" id="PF02780">
    <property type="entry name" value="Transketolase_C"/>
    <property type="match status" value="1"/>
</dbReference>
<dbReference type="SMART" id="SM00861">
    <property type="entry name" value="Transket_pyr"/>
    <property type="match status" value="1"/>
</dbReference>
<dbReference type="SUPFAM" id="SSF52518">
    <property type="entry name" value="Thiamin diphosphate-binding fold (THDP-binding)"/>
    <property type="match status" value="2"/>
</dbReference>
<dbReference type="SUPFAM" id="SSF52922">
    <property type="entry name" value="TK C-terminal domain-like"/>
    <property type="match status" value="1"/>
</dbReference>
<dbReference type="PROSITE" id="PS00801">
    <property type="entry name" value="TRANSKETOLASE_1"/>
    <property type="match status" value="1"/>
</dbReference>
<dbReference type="PROSITE" id="PS00802">
    <property type="entry name" value="TRANSKETOLASE_2"/>
    <property type="match status" value="1"/>
</dbReference>
<gene>
    <name evidence="1" type="primary">dxs</name>
    <name type="ordered locus">XOO1900</name>
</gene>
<accession>Q2P472</accession>
<keyword id="KW-0414">Isoprene biosynthesis</keyword>
<keyword id="KW-0460">Magnesium</keyword>
<keyword id="KW-0479">Metal-binding</keyword>
<keyword id="KW-0784">Thiamine biosynthesis</keyword>
<keyword id="KW-0786">Thiamine pyrophosphate</keyword>
<keyword id="KW-0808">Transferase</keyword>
<comment type="function">
    <text evidence="1">Catalyzes the acyloin condensation reaction between C atoms 2 and 3 of pyruvate and glyceraldehyde 3-phosphate to yield 1-deoxy-D-xylulose-5-phosphate (DXP).</text>
</comment>
<comment type="catalytic activity">
    <reaction evidence="1">
        <text>D-glyceraldehyde 3-phosphate + pyruvate + H(+) = 1-deoxy-D-xylulose 5-phosphate + CO2</text>
        <dbReference type="Rhea" id="RHEA:12605"/>
        <dbReference type="ChEBI" id="CHEBI:15361"/>
        <dbReference type="ChEBI" id="CHEBI:15378"/>
        <dbReference type="ChEBI" id="CHEBI:16526"/>
        <dbReference type="ChEBI" id="CHEBI:57792"/>
        <dbReference type="ChEBI" id="CHEBI:59776"/>
        <dbReference type="EC" id="2.2.1.7"/>
    </reaction>
</comment>
<comment type="cofactor">
    <cofactor evidence="1">
        <name>Mg(2+)</name>
        <dbReference type="ChEBI" id="CHEBI:18420"/>
    </cofactor>
    <text evidence="1">Binds 1 Mg(2+) ion per subunit.</text>
</comment>
<comment type="cofactor">
    <cofactor evidence="1">
        <name>thiamine diphosphate</name>
        <dbReference type="ChEBI" id="CHEBI:58937"/>
    </cofactor>
    <text evidence="1">Binds 1 thiamine pyrophosphate per subunit.</text>
</comment>
<comment type="pathway">
    <text evidence="1">Metabolic intermediate biosynthesis; 1-deoxy-D-xylulose 5-phosphate biosynthesis; 1-deoxy-D-xylulose 5-phosphate from D-glyceraldehyde 3-phosphate and pyruvate: step 1/1.</text>
</comment>
<comment type="subunit">
    <text evidence="1">Homodimer.</text>
</comment>
<comment type="similarity">
    <text evidence="1">Belongs to the transketolase family. DXPS subfamily.</text>
</comment>
<name>DXS_XANOM</name>
<protein>
    <recommendedName>
        <fullName evidence="1">1-deoxy-D-xylulose-5-phosphate synthase</fullName>
        <ecNumber evidence="1">2.2.1.7</ecNumber>
    </recommendedName>
    <alternativeName>
        <fullName evidence="1">1-deoxyxylulose-5-phosphate synthase</fullName>
        <shortName evidence="1">DXP synthase</shortName>
        <shortName evidence="1">DXPS</shortName>
    </alternativeName>
</protein>
<organism>
    <name type="scientific">Xanthomonas oryzae pv. oryzae (strain MAFF 311018)</name>
    <dbReference type="NCBI Taxonomy" id="342109"/>
    <lineage>
        <taxon>Bacteria</taxon>
        <taxon>Pseudomonadati</taxon>
        <taxon>Pseudomonadota</taxon>
        <taxon>Gammaproteobacteria</taxon>
        <taxon>Lysobacterales</taxon>
        <taxon>Lysobacteraceae</taxon>
        <taxon>Xanthomonas</taxon>
    </lineage>
</organism>